<dbReference type="EMBL" id="AL049862">
    <property type="status" value="NOT_ANNOTATED_CDS"/>
    <property type="molecule type" value="Genomic_DNA"/>
</dbReference>
<dbReference type="EMBL" id="CP002686">
    <property type="protein sequence ID" value="AEE78727.1"/>
    <property type="molecule type" value="Genomic_DNA"/>
</dbReference>
<dbReference type="RefSeq" id="NP_001030836.1">
    <property type="nucleotide sequence ID" value="NM_001035759.1"/>
</dbReference>
<dbReference type="PaxDb" id="3702-AT3G50925.1"/>
<dbReference type="EnsemblPlants" id="AT3G50925.1">
    <property type="protein sequence ID" value="AT3G50925.1"/>
    <property type="gene ID" value="AT3G50925"/>
</dbReference>
<dbReference type="GeneID" id="3769703"/>
<dbReference type="Gramene" id="AT3G50925.1">
    <property type="protein sequence ID" value="AT3G50925.1"/>
    <property type="gene ID" value="AT3G50925"/>
</dbReference>
<dbReference type="KEGG" id="ath:AT3G50925"/>
<dbReference type="Araport" id="AT3G50925"/>
<dbReference type="TAIR" id="AT3G50925"/>
<dbReference type="HOGENOM" id="CLU_2443860_0_0_1"/>
<dbReference type="InParanoid" id="Q2V3Q1"/>
<dbReference type="OMA" id="KICRIAK"/>
<dbReference type="PRO" id="PR:Q2V3Q1"/>
<dbReference type="Proteomes" id="UP000006548">
    <property type="component" value="Chromosome 3"/>
</dbReference>
<dbReference type="GO" id="GO:0005576">
    <property type="term" value="C:extracellular region"/>
    <property type="evidence" value="ECO:0007669"/>
    <property type="project" value="UniProtKB-SubCell"/>
</dbReference>
<dbReference type="GO" id="GO:0050832">
    <property type="term" value="P:defense response to fungus"/>
    <property type="evidence" value="ECO:0007669"/>
    <property type="project" value="UniProtKB-KW"/>
</dbReference>
<dbReference type="GO" id="GO:0031640">
    <property type="term" value="P:killing of cells of another organism"/>
    <property type="evidence" value="ECO:0007669"/>
    <property type="project" value="UniProtKB-KW"/>
</dbReference>
<dbReference type="GO" id="GO:0007165">
    <property type="term" value="P:signal transduction"/>
    <property type="evidence" value="ECO:0007669"/>
    <property type="project" value="InterPro"/>
</dbReference>
<dbReference type="InterPro" id="IPR010682">
    <property type="entry name" value="SCRL"/>
</dbReference>
<dbReference type="Pfam" id="PF06876">
    <property type="entry name" value="SCRL"/>
    <property type="match status" value="1"/>
</dbReference>
<evidence type="ECO:0000250" key="1"/>
<evidence type="ECO:0000255" key="2"/>
<evidence type="ECO:0000305" key="3"/>
<name>DF168_ARATH</name>
<accession>Q2V3Q1</accession>
<reference key="1">
    <citation type="journal article" date="2000" name="Nature">
        <title>Sequence and analysis of chromosome 3 of the plant Arabidopsis thaliana.</title>
        <authorList>
            <person name="Salanoubat M."/>
            <person name="Lemcke K."/>
            <person name="Rieger M."/>
            <person name="Ansorge W."/>
            <person name="Unseld M."/>
            <person name="Fartmann B."/>
            <person name="Valle G."/>
            <person name="Bloecker H."/>
            <person name="Perez-Alonso M."/>
            <person name="Obermaier B."/>
            <person name="Delseny M."/>
            <person name="Boutry M."/>
            <person name="Grivell L.A."/>
            <person name="Mache R."/>
            <person name="Puigdomenech P."/>
            <person name="De Simone V."/>
            <person name="Choisne N."/>
            <person name="Artiguenave F."/>
            <person name="Robert C."/>
            <person name="Brottier P."/>
            <person name="Wincker P."/>
            <person name="Cattolico L."/>
            <person name="Weissenbach J."/>
            <person name="Saurin W."/>
            <person name="Quetier F."/>
            <person name="Schaefer M."/>
            <person name="Mueller-Auer S."/>
            <person name="Gabel C."/>
            <person name="Fuchs M."/>
            <person name="Benes V."/>
            <person name="Wurmbach E."/>
            <person name="Drzonek H."/>
            <person name="Erfle H."/>
            <person name="Jordan N."/>
            <person name="Bangert S."/>
            <person name="Wiedelmann R."/>
            <person name="Kranz H."/>
            <person name="Voss H."/>
            <person name="Holland R."/>
            <person name="Brandt P."/>
            <person name="Nyakatura G."/>
            <person name="Vezzi A."/>
            <person name="D'Angelo M."/>
            <person name="Pallavicini A."/>
            <person name="Toppo S."/>
            <person name="Simionati B."/>
            <person name="Conrad A."/>
            <person name="Hornischer K."/>
            <person name="Kauer G."/>
            <person name="Loehnert T.-H."/>
            <person name="Nordsiek G."/>
            <person name="Reichelt J."/>
            <person name="Scharfe M."/>
            <person name="Schoen O."/>
            <person name="Bargues M."/>
            <person name="Terol J."/>
            <person name="Climent J."/>
            <person name="Navarro P."/>
            <person name="Collado C."/>
            <person name="Perez-Perez A."/>
            <person name="Ottenwaelder B."/>
            <person name="Duchemin D."/>
            <person name="Cooke R."/>
            <person name="Laudie M."/>
            <person name="Berger-Llauro C."/>
            <person name="Purnelle B."/>
            <person name="Masuy D."/>
            <person name="de Haan M."/>
            <person name="Maarse A.C."/>
            <person name="Alcaraz J.-P."/>
            <person name="Cottet A."/>
            <person name="Casacuberta E."/>
            <person name="Monfort A."/>
            <person name="Argiriou A."/>
            <person name="Flores M."/>
            <person name="Liguori R."/>
            <person name="Vitale D."/>
            <person name="Mannhaupt G."/>
            <person name="Haase D."/>
            <person name="Schoof H."/>
            <person name="Rudd S."/>
            <person name="Zaccaria P."/>
            <person name="Mewes H.-W."/>
            <person name="Mayer K.F.X."/>
            <person name="Kaul S."/>
            <person name="Town C.D."/>
            <person name="Koo H.L."/>
            <person name="Tallon L.J."/>
            <person name="Jenkins J."/>
            <person name="Rooney T."/>
            <person name="Rizzo M."/>
            <person name="Walts A."/>
            <person name="Utterback T."/>
            <person name="Fujii C.Y."/>
            <person name="Shea T.P."/>
            <person name="Creasy T.H."/>
            <person name="Haas B."/>
            <person name="Maiti R."/>
            <person name="Wu D."/>
            <person name="Peterson J."/>
            <person name="Van Aken S."/>
            <person name="Pai G."/>
            <person name="Militscher J."/>
            <person name="Sellers P."/>
            <person name="Gill J.E."/>
            <person name="Feldblyum T.V."/>
            <person name="Preuss D."/>
            <person name="Lin X."/>
            <person name="Nierman W.C."/>
            <person name="Salzberg S.L."/>
            <person name="White O."/>
            <person name="Venter J.C."/>
            <person name="Fraser C.M."/>
            <person name="Kaneko T."/>
            <person name="Nakamura Y."/>
            <person name="Sato S."/>
            <person name="Kato T."/>
            <person name="Asamizu E."/>
            <person name="Sasamoto S."/>
            <person name="Kimura T."/>
            <person name="Idesawa K."/>
            <person name="Kawashima K."/>
            <person name="Kishida Y."/>
            <person name="Kiyokawa C."/>
            <person name="Kohara M."/>
            <person name="Matsumoto M."/>
            <person name="Matsuno A."/>
            <person name="Muraki A."/>
            <person name="Nakayama S."/>
            <person name="Nakazaki N."/>
            <person name="Shinpo S."/>
            <person name="Takeuchi C."/>
            <person name="Wada T."/>
            <person name="Watanabe A."/>
            <person name="Yamada M."/>
            <person name="Yasuda M."/>
            <person name="Tabata S."/>
        </authorList>
    </citation>
    <scope>NUCLEOTIDE SEQUENCE [LARGE SCALE GENOMIC DNA]</scope>
    <source>
        <strain>cv. Columbia</strain>
    </source>
</reference>
<reference key="2">
    <citation type="journal article" date="2017" name="Plant J.">
        <title>Araport11: a complete reannotation of the Arabidopsis thaliana reference genome.</title>
        <authorList>
            <person name="Cheng C.Y."/>
            <person name="Krishnakumar V."/>
            <person name="Chan A.P."/>
            <person name="Thibaud-Nissen F."/>
            <person name="Schobel S."/>
            <person name="Town C.D."/>
        </authorList>
    </citation>
    <scope>GENOME REANNOTATION</scope>
    <source>
        <strain>cv. Columbia</strain>
    </source>
</reference>
<reference key="3">
    <citation type="journal article" date="2005" name="Plant Physiol.">
        <title>Genome organization of more than 300 defensin-like genes in Arabidopsis.</title>
        <authorList>
            <person name="Silverstein K.A.T."/>
            <person name="Graham M.A."/>
            <person name="Paape T.D."/>
            <person name="VandenBosch K.A."/>
        </authorList>
    </citation>
    <scope>GENE FAMILY</scope>
</reference>
<gene>
    <name type="ordered locus">At3g50925</name>
    <name type="ORF">F18B3</name>
</gene>
<sequence>MKYFTLFMISYIFISIFVFSHIHDVEARNRICRTSEKYYREFCGHAGNDDCLSKSTKKPKPFKCVCHDNRSQNITSINDRYNNCICTFYC</sequence>
<comment type="subcellular location">
    <subcellularLocation>
        <location evidence="1">Secreted</location>
    </subcellularLocation>
</comment>
<comment type="similarity">
    <text evidence="3">Belongs to the DEFL family.</text>
</comment>
<organism>
    <name type="scientific">Arabidopsis thaliana</name>
    <name type="common">Mouse-ear cress</name>
    <dbReference type="NCBI Taxonomy" id="3702"/>
    <lineage>
        <taxon>Eukaryota</taxon>
        <taxon>Viridiplantae</taxon>
        <taxon>Streptophyta</taxon>
        <taxon>Embryophyta</taxon>
        <taxon>Tracheophyta</taxon>
        <taxon>Spermatophyta</taxon>
        <taxon>Magnoliopsida</taxon>
        <taxon>eudicotyledons</taxon>
        <taxon>Gunneridae</taxon>
        <taxon>Pentapetalae</taxon>
        <taxon>rosids</taxon>
        <taxon>malvids</taxon>
        <taxon>Brassicales</taxon>
        <taxon>Brassicaceae</taxon>
        <taxon>Camelineae</taxon>
        <taxon>Arabidopsis</taxon>
    </lineage>
</organism>
<feature type="signal peptide" evidence="2">
    <location>
        <begin position="1"/>
        <end position="27"/>
    </location>
</feature>
<feature type="chain" id="PRO_0000379684" description="Putative defensin-like protein 168">
    <location>
        <begin position="28"/>
        <end position="90"/>
    </location>
</feature>
<feature type="disulfide bond" evidence="1">
    <location>
        <begin position="32"/>
        <end position="90"/>
    </location>
</feature>
<feature type="disulfide bond" evidence="1">
    <location>
        <begin position="43"/>
        <end position="66"/>
    </location>
</feature>
<feature type="disulfide bond" evidence="1">
    <location>
        <begin position="51"/>
        <end position="84"/>
    </location>
</feature>
<feature type="disulfide bond" evidence="1">
    <location>
        <begin position="64"/>
        <end position="86"/>
    </location>
</feature>
<keyword id="KW-0929">Antimicrobial</keyword>
<keyword id="KW-1015">Disulfide bond</keyword>
<keyword id="KW-0295">Fungicide</keyword>
<keyword id="KW-0611">Plant defense</keyword>
<keyword id="KW-1185">Reference proteome</keyword>
<keyword id="KW-0964">Secreted</keyword>
<keyword id="KW-0732">Signal</keyword>
<proteinExistence type="inferred from homology"/>
<protein>
    <recommendedName>
        <fullName>Putative defensin-like protein 168</fullName>
    </recommendedName>
</protein>